<protein>
    <recommendedName>
        <fullName>Chorion class high-cysteine HCB protein 13</fullName>
        <shortName>HC-B.13</shortName>
    </recommendedName>
</protein>
<keyword id="KW-1185">Reference proteome</keyword>
<keyword id="KW-0677">Repeat</keyword>
<keyword id="KW-0732">Signal</keyword>
<accession>P20730</accession>
<feature type="signal peptide">
    <location>
        <begin position="1"/>
        <end position="21"/>
    </location>
</feature>
<feature type="chain" id="PRO_0000005386" description="Chorion class high-cysteine HCB protein 13">
    <location>
        <begin position="22"/>
        <end position="178"/>
    </location>
</feature>
<feature type="region of interest" description="Left arm">
    <location>
        <begin position="22"/>
        <end position="46"/>
    </location>
</feature>
<feature type="region of interest" description="Central domain">
    <location>
        <begin position="47"/>
        <end position="110"/>
    </location>
</feature>
<feature type="region of interest" description="Right arm (Gly-rich tandem repeats)">
    <location>
        <begin position="111"/>
        <end position="178"/>
    </location>
</feature>
<organism>
    <name type="scientific">Bombyx mori</name>
    <name type="common">Silk moth</name>
    <dbReference type="NCBI Taxonomy" id="7091"/>
    <lineage>
        <taxon>Eukaryota</taxon>
        <taxon>Metazoa</taxon>
        <taxon>Ecdysozoa</taxon>
        <taxon>Arthropoda</taxon>
        <taxon>Hexapoda</taxon>
        <taxon>Insecta</taxon>
        <taxon>Pterygota</taxon>
        <taxon>Neoptera</taxon>
        <taxon>Endopterygota</taxon>
        <taxon>Lepidoptera</taxon>
        <taxon>Glossata</taxon>
        <taxon>Ditrysia</taxon>
        <taxon>Bombycoidea</taxon>
        <taxon>Bombycidae</taxon>
        <taxon>Bombycinae</taxon>
        <taxon>Bombyx</taxon>
    </lineage>
</organism>
<comment type="function">
    <text>This protein is one of many from the eggshell of the silk moth.</text>
</comment>
<comment type="similarity">
    <text evidence="1">Belongs to the chorion protein family.</text>
</comment>
<proteinExistence type="inferred from homology"/>
<reference key="1">
    <citation type="journal article" date="1984" name="J. Mol. Evol.">
        <title>Diversity in a chorion multigene family created by tandem duplications and a putative gene-conversion event.</title>
        <authorList>
            <person name="Rodakis G.C."/>
            <person name="Lecanidou R."/>
            <person name="Eickbush T.H."/>
        </authorList>
    </citation>
    <scope>NUCLEOTIDE SEQUENCE [GENOMIC DNA]</scope>
</reference>
<evidence type="ECO:0000305" key="1"/>
<dbReference type="EMBL" id="X01068">
    <property type="status" value="NOT_ANNOTATED_CDS"/>
    <property type="molecule type" value="Genomic_DNA"/>
</dbReference>
<dbReference type="PIR" id="A23219">
    <property type="entry name" value="A23219"/>
</dbReference>
<dbReference type="InParanoid" id="P20730"/>
<dbReference type="Proteomes" id="UP000005204">
    <property type="component" value="Unassembled WGS sequence"/>
</dbReference>
<name>CHHB2_BOMMO</name>
<sequence>MAAKLILFVCAIALVAQSVLGTGCGCCCRGCGCGCGGCGSRCCDRFCLCSNSAAPTGLSICSENRYNGDVCVCGEVPFLGTADVCGDMCSSGCGCIDYGCGDGCVGITQSCGGCGCGCGGCGGCGCGGCGGCGCGGCGGCGCCGGCGGCGCGCGGCGGCGCCGGCGGCGCGCGGCGCC</sequence>